<keyword id="KW-0025">Alternative splicing</keyword>
<keyword id="KW-0131">Cell cycle</keyword>
<keyword id="KW-0225">Disease variant</keyword>
<keyword id="KW-0488">Methylation</keyword>
<keyword id="KW-0539">Nucleus</keyword>
<keyword id="KW-0597">Phosphoprotein</keyword>
<keyword id="KW-0649">Protein kinase inhibitor</keyword>
<keyword id="KW-1267">Proteomics identification</keyword>
<keyword id="KW-1185">Reference proteome</keyword>
<keyword id="KW-0677">Repeat</keyword>
<keyword id="KW-0043">Tumor suppressor</keyword>
<evidence type="ECO:0000250" key="1"/>
<evidence type="ECO:0000250" key="2">
    <source>
        <dbReference type="UniProtKB" id="P49919"/>
    </source>
</evidence>
<evidence type="ECO:0000255" key="3"/>
<evidence type="ECO:0000256" key="4">
    <source>
        <dbReference type="SAM" id="MobiDB-lite"/>
    </source>
</evidence>
<evidence type="ECO:0000269" key="5">
    <source>
    </source>
</evidence>
<evidence type="ECO:0000269" key="6">
    <source>
    </source>
</evidence>
<evidence type="ECO:0000269" key="7">
    <source>
    </source>
</evidence>
<evidence type="ECO:0000305" key="8"/>
<evidence type="ECO:0000305" key="9">
    <source>
    </source>
</evidence>
<evidence type="ECO:0007744" key="10">
    <source>
    </source>
</evidence>
<name>CDN1C_HUMAN</name>
<dbReference type="EMBL" id="U22398">
    <property type="protein sequence ID" value="AAA85095.1"/>
    <property type="molecule type" value="mRNA"/>
</dbReference>
<dbReference type="EMBL" id="U48869">
    <property type="protein sequence ID" value="AAB05896.1"/>
    <property type="molecule type" value="Genomic_DNA"/>
</dbReference>
<dbReference type="EMBL" id="BC067842">
    <property type="protein sequence ID" value="AAH67842.1"/>
    <property type="molecule type" value="mRNA"/>
</dbReference>
<dbReference type="EMBL" id="D64137">
    <property type="protein sequence ID" value="BAA11014.1"/>
    <property type="molecule type" value="Genomic_DNA"/>
</dbReference>
<dbReference type="EMBL" id="D64137">
    <property type="protein sequence ID" value="BAA11015.1"/>
    <property type="molecule type" value="Genomic_DNA"/>
</dbReference>
<dbReference type="CCDS" id="CCDS44519.1">
    <molecule id="P49918-2"/>
</dbReference>
<dbReference type="CCDS" id="CCDS7738.1">
    <molecule id="P49918-1"/>
</dbReference>
<dbReference type="PIR" id="G02424">
    <property type="entry name" value="G02424"/>
</dbReference>
<dbReference type="RefSeq" id="NP_000067.1">
    <molecule id="P49918-1"/>
    <property type="nucleotide sequence ID" value="NM_000076.2"/>
</dbReference>
<dbReference type="RefSeq" id="NP_001116102.1">
    <molecule id="P49918-2"/>
    <property type="nucleotide sequence ID" value="NM_001122630.2"/>
</dbReference>
<dbReference type="RefSeq" id="NP_001116103.1">
    <molecule id="P49918-2"/>
    <property type="nucleotide sequence ID" value="NM_001122631.2"/>
</dbReference>
<dbReference type="RefSeq" id="NP_001349403.1">
    <molecule id="P49918-1"/>
    <property type="nucleotide sequence ID" value="NM_001362474.2"/>
</dbReference>
<dbReference type="RefSeq" id="XP_016872577.1">
    <property type="nucleotide sequence ID" value="XM_017017088.1"/>
</dbReference>
<dbReference type="BioGRID" id="107462">
    <property type="interactions" value="39"/>
</dbReference>
<dbReference type="ELM" id="P49918"/>
<dbReference type="FunCoup" id="P49918">
    <property type="interactions" value="879"/>
</dbReference>
<dbReference type="IntAct" id="P49918">
    <property type="interactions" value="17"/>
</dbReference>
<dbReference type="MINT" id="P49918"/>
<dbReference type="STRING" id="9606.ENSP00000413720"/>
<dbReference type="GlyGen" id="P49918">
    <property type="glycosylation" value="1 site"/>
</dbReference>
<dbReference type="iPTMnet" id="P49918"/>
<dbReference type="PhosphoSitePlus" id="P49918"/>
<dbReference type="BioMuta" id="CDKN1C"/>
<dbReference type="DMDM" id="1705731"/>
<dbReference type="jPOST" id="P49918"/>
<dbReference type="MassIVE" id="P49918"/>
<dbReference type="PaxDb" id="9606-ENSP00000413720"/>
<dbReference type="PeptideAtlas" id="P49918"/>
<dbReference type="ProteomicsDB" id="56184">
    <molecule id="P49918-1"/>
</dbReference>
<dbReference type="ProteomicsDB" id="56185">
    <molecule id="P49918-2"/>
</dbReference>
<dbReference type="Pumba" id="P49918"/>
<dbReference type="Antibodypedia" id="972">
    <property type="antibodies" value="1220 antibodies from 42 providers"/>
</dbReference>
<dbReference type="DNASU" id="1028"/>
<dbReference type="Ensembl" id="ENST00000414822.8">
    <molecule id="P49918-1"/>
    <property type="protein sequence ID" value="ENSP00000413720.3"/>
    <property type="gene ID" value="ENSG00000129757.15"/>
</dbReference>
<dbReference type="Ensembl" id="ENST00000430149.3">
    <molecule id="P49918-1"/>
    <property type="protein sequence ID" value="ENSP00000411552.2"/>
    <property type="gene ID" value="ENSG00000129757.15"/>
</dbReference>
<dbReference type="Ensembl" id="ENST00000440480.8">
    <molecule id="P49918-2"/>
    <property type="protein sequence ID" value="ENSP00000411257.2"/>
    <property type="gene ID" value="ENSG00000129757.15"/>
</dbReference>
<dbReference type="GeneID" id="1028"/>
<dbReference type="KEGG" id="hsa:1028"/>
<dbReference type="MANE-Select" id="ENST00000440480.8">
    <molecule id="P49918-2"/>
    <property type="protein sequence ID" value="ENSP00000411257.2"/>
    <property type="RefSeq nucleotide sequence ID" value="NM_001122630.2"/>
    <property type="RefSeq protein sequence ID" value="NP_001116102.1"/>
</dbReference>
<dbReference type="UCSC" id="uc001lwr.5">
    <molecule id="P49918-1"/>
    <property type="organism name" value="human"/>
</dbReference>
<dbReference type="AGR" id="HGNC:1786"/>
<dbReference type="CTD" id="1028"/>
<dbReference type="DisGeNET" id="1028"/>
<dbReference type="GeneCards" id="CDKN1C"/>
<dbReference type="GeneReviews" id="CDKN1C"/>
<dbReference type="HGNC" id="HGNC:1786">
    <property type="gene designation" value="CDKN1C"/>
</dbReference>
<dbReference type="HPA" id="ENSG00000129757">
    <property type="expression patterns" value="Tissue enhanced (brain, ovary)"/>
</dbReference>
<dbReference type="MalaCards" id="CDKN1C"/>
<dbReference type="MIM" id="130650">
    <property type="type" value="phenotype"/>
</dbReference>
<dbReference type="MIM" id="600856">
    <property type="type" value="gene"/>
</dbReference>
<dbReference type="MIM" id="614732">
    <property type="type" value="phenotype"/>
</dbReference>
<dbReference type="neXtProt" id="NX_P49918"/>
<dbReference type="OpenTargets" id="ENSG00000129757"/>
<dbReference type="Orphanet" id="231120">
    <property type="disease" value="Beckwith-Wiedemann syndrome due to CDKN1C mutation"/>
</dbReference>
<dbReference type="Orphanet" id="85173">
    <property type="disease" value="IMAGe syndrome"/>
</dbReference>
<dbReference type="Orphanet" id="436144">
    <property type="disease" value="Intrauterine growth restriction-short stature-early adult-onset diabetes syndrome"/>
</dbReference>
<dbReference type="Orphanet" id="397590">
    <property type="disease" value="Silver-Russell syndrome due to a point mutation"/>
</dbReference>
<dbReference type="PharmGKB" id="PA26320"/>
<dbReference type="VEuPathDB" id="HostDB:ENSG00000129757"/>
<dbReference type="eggNOG" id="KOG4743">
    <property type="taxonomic scope" value="Eukaryota"/>
</dbReference>
<dbReference type="GeneTree" id="ENSGT00940000162677"/>
<dbReference type="HOGENOM" id="CLU_077692_0_0_1"/>
<dbReference type="InParanoid" id="P49918"/>
<dbReference type="OMA" id="QENRTDK"/>
<dbReference type="OrthoDB" id="9940972at2759"/>
<dbReference type="PAN-GO" id="P49918">
    <property type="GO annotations" value="2 GO annotations based on evolutionary models"/>
</dbReference>
<dbReference type="PhylomeDB" id="P49918"/>
<dbReference type="TreeFam" id="TF101111"/>
<dbReference type="PathwayCommons" id="P49918"/>
<dbReference type="Reactome" id="R-HSA-69231">
    <property type="pathway name" value="Cyclin D associated events in G1"/>
</dbReference>
<dbReference type="Reactome" id="R-HSA-9661069">
    <property type="pathway name" value="Defective binding of RB1 mutants to E2F1,(E2F2, E2F3)"/>
</dbReference>
<dbReference type="SignaLink" id="P49918"/>
<dbReference type="SIGNOR" id="P49918"/>
<dbReference type="BioGRID-ORCS" id="1028">
    <property type="hits" value="30 hits in 1178 CRISPR screens"/>
</dbReference>
<dbReference type="ChiTaRS" id="CDKN1C">
    <property type="organism name" value="human"/>
</dbReference>
<dbReference type="GeneWiki" id="Cyclin-dependent_kinase_inhibitor_1C"/>
<dbReference type="GenomeRNAi" id="1028"/>
<dbReference type="Pharos" id="P49918">
    <property type="development level" value="Tbio"/>
</dbReference>
<dbReference type="PRO" id="PR:P49918"/>
<dbReference type="Proteomes" id="UP000005640">
    <property type="component" value="Chromosome 11"/>
</dbReference>
<dbReference type="RNAct" id="P49918">
    <property type="molecule type" value="protein"/>
</dbReference>
<dbReference type="Bgee" id="ENSG00000129757">
    <property type="expression patterns" value="Expressed in placenta and 95 other cell types or tissues"/>
</dbReference>
<dbReference type="ExpressionAtlas" id="P49918">
    <property type="expression patterns" value="baseline and differential"/>
</dbReference>
<dbReference type="GO" id="GO:0005737">
    <property type="term" value="C:cytoplasm"/>
    <property type="evidence" value="ECO:0000314"/>
    <property type="project" value="BHF-UCL"/>
</dbReference>
<dbReference type="GO" id="GO:0005634">
    <property type="term" value="C:nucleus"/>
    <property type="evidence" value="ECO:0000314"/>
    <property type="project" value="BHF-UCL"/>
</dbReference>
<dbReference type="GO" id="GO:0004861">
    <property type="term" value="F:cyclin-dependent protein serine/threonine kinase inhibitor activity"/>
    <property type="evidence" value="ECO:0007669"/>
    <property type="project" value="InterPro"/>
</dbReference>
<dbReference type="GO" id="GO:0140678">
    <property type="term" value="F:molecular function inhibitor activity"/>
    <property type="evidence" value="ECO:0000315"/>
    <property type="project" value="DisProt"/>
</dbReference>
<dbReference type="GO" id="GO:0004860">
    <property type="term" value="F:protein kinase inhibitor activity"/>
    <property type="evidence" value="ECO:0000315"/>
    <property type="project" value="CAFA"/>
</dbReference>
<dbReference type="GO" id="GO:0044877">
    <property type="term" value="F:protein-containing complex binding"/>
    <property type="evidence" value="ECO:0000353"/>
    <property type="project" value="CAFA"/>
</dbReference>
<dbReference type="GO" id="GO:0030325">
    <property type="term" value="P:adrenal gland development"/>
    <property type="evidence" value="ECO:0007669"/>
    <property type="project" value="Ensembl"/>
</dbReference>
<dbReference type="GO" id="GO:0043010">
    <property type="term" value="P:camera-type eye development"/>
    <property type="evidence" value="ECO:0007669"/>
    <property type="project" value="Ensembl"/>
</dbReference>
<dbReference type="GO" id="GO:0055123">
    <property type="term" value="P:digestive system development"/>
    <property type="evidence" value="ECO:0007669"/>
    <property type="project" value="Ensembl"/>
</dbReference>
<dbReference type="GO" id="GO:0060669">
    <property type="term" value="P:embryonic placenta morphogenesis"/>
    <property type="evidence" value="ECO:0007669"/>
    <property type="project" value="Ensembl"/>
</dbReference>
<dbReference type="GO" id="GO:0071514">
    <property type="term" value="P:genomic imprinting"/>
    <property type="evidence" value="ECO:0007669"/>
    <property type="project" value="Ensembl"/>
</dbReference>
<dbReference type="GO" id="GO:0001822">
    <property type="term" value="P:kidney development"/>
    <property type="evidence" value="ECO:0007669"/>
    <property type="project" value="Ensembl"/>
</dbReference>
<dbReference type="GO" id="GO:0035264">
    <property type="term" value="P:multicellular organism growth"/>
    <property type="evidence" value="ECO:0007669"/>
    <property type="project" value="Ensembl"/>
</dbReference>
<dbReference type="GO" id="GO:0030099">
    <property type="term" value="P:myeloid cell differentiation"/>
    <property type="evidence" value="ECO:0007669"/>
    <property type="project" value="Ensembl"/>
</dbReference>
<dbReference type="GO" id="GO:1904030">
    <property type="term" value="P:negative regulation of cyclin-dependent protein kinase activity"/>
    <property type="evidence" value="ECO:0000315"/>
    <property type="project" value="CAFA"/>
</dbReference>
<dbReference type="GO" id="GO:0045892">
    <property type="term" value="P:negative regulation of DNA-templated transcription"/>
    <property type="evidence" value="ECO:0000314"/>
    <property type="project" value="UniProtKB"/>
</dbReference>
<dbReference type="GO" id="GO:0050680">
    <property type="term" value="P:negative regulation of epithelial cell proliferation"/>
    <property type="evidence" value="ECO:0000315"/>
    <property type="project" value="BHF-UCL"/>
</dbReference>
<dbReference type="GO" id="GO:0033673">
    <property type="term" value="P:negative regulation of kinase activity"/>
    <property type="evidence" value="ECO:0000314"/>
    <property type="project" value="UniProtKB"/>
</dbReference>
<dbReference type="GO" id="GO:0045930">
    <property type="term" value="P:negative regulation of mitotic cell cycle"/>
    <property type="evidence" value="ECO:0000318"/>
    <property type="project" value="GO_Central"/>
</dbReference>
<dbReference type="GO" id="GO:0042326">
    <property type="term" value="P:negative regulation of phosphorylation"/>
    <property type="evidence" value="ECO:0000314"/>
    <property type="project" value="UniProtKB"/>
</dbReference>
<dbReference type="GO" id="GO:0000122">
    <property type="term" value="P:negative regulation of transcription by RNA polymerase II"/>
    <property type="evidence" value="ECO:0007669"/>
    <property type="project" value="Ensembl"/>
</dbReference>
<dbReference type="GO" id="GO:0042551">
    <property type="term" value="P:neuron maturation"/>
    <property type="evidence" value="ECO:0007669"/>
    <property type="project" value="Ensembl"/>
</dbReference>
<dbReference type="GO" id="GO:0045893">
    <property type="term" value="P:positive regulation of DNA-templated transcription"/>
    <property type="evidence" value="ECO:0000316"/>
    <property type="project" value="UniProtKB"/>
</dbReference>
<dbReference type="GO" id="GO:0030511">
    <property type="term" value="P:positive regulation of transforming growth factor beta receptor signaling pathway"/>
    <property type="evidence" value="ECO:0000315"/>
    <property type="project" value="BHF-UCL"/>
</dbReference>
<dbReference type="GO" id="GO:0007096">
    <property type="term" value="P:regulation of exit from mitosis"/>
    <property type="evidence" value="ECO:0007669"/>
    <property type="project" value="Ensembl"/>
</dbReference>
<dbReference type="GO" id="GO:1902746">
    <property type="term" value="P:regulation of lens fiber cell differentiation"/>
    <property type="evidence" value="ECO:0007669"/>
    <property type="project" value="Ensembl"/>
</dbReference>
<dbReference type="GO" id="GO:0001501">
    <property type="term" value="P:skeletal system development"/>
    <property type="evidence" value="ECO:0007669"/>
    <property type="project" value="Ensembl"/>
</dbReference>
<dbReference type="GO" id="GO:0060065">
    <property type="term" value="P:uterus development"/>
    <property type="evidence" value="ECO:0007669"/>
    <property type="project" value="Ensembl"/>
</dbReference>
<dbReference type="DisProt" id="DP00017"/>
<dbReference type="FunFam" id="4.10.365.10:FF:000002">
    <property type="entry name" value="cyclin-dependent kinase inhibitor 1C"/>
    <property type="match status" value="1"/>
</dbReference>
<dbReference type="Gene3D" id="4.10.365.10">
    <property type="entry name" value="p27"/>
    <property type="match status" value="1"/>
</dbReference>
<dbReference type="InterPro" id="IPR003175">
    <property type="entry name" value="CDI_dom"/>
</dbReference>
<dbReference type="InterPro" id="IPR044898">
    <property type="entry name" value="CDI_dom_sf"/>
</dbReference>
<dbReference type="PANTHER" id="PTHR10265">
    <property type="entry name" value="CYCLIN-DEPENDENT KINASE INHIBITOR 1"/>
    <property type="match status" value="1"/>
</dbReference>
<dbReference type="PANTHER" id="PTHR10265:SF44">
    <property type="entry name" value="CYCLIN-DEPENDENT KINASE INHIBITOR 1C"/>
    <property type="match status" value="1"/>
</dbReference>
<dbReference type="Pfam" id="PF02234">
    <property type="entry name" value="CDI"/>
    <property type="match status" value="1"/>
</dbReference>
<feature type="chain" id="PRO_0000190087" description="Cyclin-dependent kinase inhibitor 1C">
    <location>
        <begin position="1"/>
        <end position="316"/>
    </location>
</feature>
<feature type="repeat" description="1">
    <location>
        <begin position="156"/>
        <end position="159"/>
    </location>
</feature>
<feature type="repeat" description="2">
    <location>
        <begin position="160"/>
        <end position="163"/>
    </location>
</feature>
<feature type="repeat" description="3">
    <location>
        <begin position="180"/>
        <end position="183"/>
    </location>
</feature>
<feature type="repeat" description="4">
    <location>
        <begin position="184"/>
        <end position="187"/>
    </location>
</feature>
<feature type="repeat" description="5">
    <location>
        <begin position="188"/>
        <end position="191"/>
    </location>
</feature>
<feature type="repeat" description="6">
    <location>
        <begin position="198"/>
        <end position="201"/>
    </location>
</feature>
<feature type="repeat" description="7">
    <location>
        <begin position="202"/>
        <end position="205"/>
    </location>
</feature>
<feature type="repeat" description="8">
    <location>
        <begin position="206"/>
        <end position="209"/>
    </location>
</feature>
<feature type="repeat" description="9">
    <location>
        <begin position="210"/>
        <end position="213"/>
    </location>
</feature>
<feature type="region of interest" description="Disordered" evidence="4">
    <location>
        <begin position="124"/>
        <end position="153"/>
    </location>
</feature>
<feature type="region of interest" description="9 X 4 AA repeats of P-A-P-A">
    <location>
        <begin position="156"/>
        <end position="213"/>
    </location>
</feature>
<feature type="region of interest" description="Disordered" evidence="4">
    <location>
        <begin position="181"/>
        <end position="260"/>
    </location>
</feature>
<feature type="region of interest" description="Disordered" evidence="4">
    <location>
        <begin position="278"/>
        <end position="316"/>
    </location>
</feature>
<feature type="short sequence motif" description="Nuclear localization signal" evidence="3">
    <location>
        <begin position="278"/>
        <end position="281"/>
    </location>
</feature>
<feature type="compositionally biased region" description="Pro residues" evidence="4">
    <location>
        <begin position="139"/>
        <end position="153"/>
    </location>
</feature>
<feature type="compositionally biased region" description="Pro residues" evidence="4">
    <location>
        <begin position="181"/>
        <end position="217"/>
    </location>
</feature>
<feature type="compositionally biased region" description="Polar residues" evidence="4">
    <location>
        <begin position="223"/>
        <end position="233"/>
    </location>
</feature>
<feature type="compositionally biased region" description="Low complexity" evidence="4">
    <location>
        <begin position="251"/>
        <end position="260"/>
    </location>
</feature>
<feature type="modified residue" description="Omega-N-methylarginine" evidence="2">
    <location>
        <position position="107"/>
    </location>
</feature>
<feature type="modified residue" description="Phosphoserine" evidence="10">
    <location>
        <position position="268"/>
    </location>
</feature>
<feature type="splice variant" id="VSP_000867" description="In isoform Short." evidence="8">
    <location>
        <begin position="1"/>
        <end position="11"/>
    </location>
</feature>
<feature type="sequence variant" id="VAR_075200" description="In BWS; uncertain significance; dbSNP:rs483352966." evidence="7">
    <original>M</original>
    <variation>L</variation>
    <location>
        <position position="12"/>
    </location>
</feature>
<feature type="sequence variant" id="VAR_075201" description="In BWS; dbSNP:rs483352968." evidence="7">
    <original>L</original>
    <variation>P</variation>
    <location>
        <position position="53"/>
    </location>
</feature>
<feature type="sequence variant" id="VAR_075202" description="In BWS; dbSNP:rs483352969." evidence="7">
    <location>
        <position position="64"/>
    </location>
</feature>
<feature type="sequence variant" id="VAR_075203" description="In BWS; dbSNP:rs483352970." evidence="7">
    <original>P</original>
    <variation>L</variation>
    <location>
        <position position="70"/>
    </location>
</feature>
<feature type="sequence variant" id="VAR_075204" description="In BWS; uncertain significance; dbSNP:rs483352981." evidence="7">
    <original>P</original>
    <variation>A</variation>
    <location>
        <position position="158"/>
    </location>
</feature>
<feature type="sequence variant" id="VAR_001404" description="In several cancers.">
    <location>
        <begin position="171"/>
        <end position="174"/>
    </location>
</feature>
<feature type="sequence variant" id="VAR_001405" description="In hepatocellular carcinomas.">
    <location>
        <begin position="181"/>
        <end position="184"/>
    </location>
</feature>
<feature type="sequence variant" id="VAR_001406" description="In a bladder cancer.">
    <location>
        <begin position="200"/>
        <end position="203"/>
    </location>
</feature>
<feature type="sequence variant" id="VAR_001407" description="In a breast cancer.">
    <location>
        <begin position="206"/>
        <end position="209"/>
    </location>
</feature>
<feature type="sequence variant" id="VAR_075205" description="In BWS; dbSNP:rs772704243." evidence="7">
    <original>A</original>
    <variation>APA</variation>
    <location>
        <position position="215"/>
    </location>
</feature>
<feature type="sequence variant" id="VAR_068848" description="In IMAGE; dbSNP:rs387907225." evidence="6">
    <original>D</original>
    <variation>N</variation>
    <location>
        <position position="274"/>
    </location>
</feature>
<feature type="sequence variant" id="VAR_068849" description="In IMAGE; PCNA binding is disrupted; dbSNP:rs387907224." evidence="6">
    <original>F</original>
    <variation>S</variation>
    <location>
        <position position="276"/>
    </location>
</feature>
<feature type="sequence variant" id="VAR_068850" description="In IMAGE; dbSNP:rs387907223." evidence="6">
    <original>F</original>
    <variation>V</variation>
    <location>
        <position position="276"/>
    </location>
</feature>
<feature type="sequence variant" id="VAR_068851" description="In IMAGE; PCNA binding is disrupted; dbSNP:rs387907226." evidence="6">
    <original>K</original>
    <variation>E</variation>
    <location>
        <position position="278"/>
    </location>
</feature>
<feature type="sequence variant" id="VAR_068852" description="In IMAGE; dbSNP:rs318240750." evidence="6">
    <original>R</original>
    <variation>P</variation>
    <location>
        <position position="279"/>
    </location>
</feature>
<proteinExistence type="evidence at protein level"/>
<gene>
    <name type="primary">CDKN1C</name>
    <name type="synonym">KIP2</name>
</gene>
<comment type="function">
    <text>Potent tight-binding inhibitor of several G1 cyclin/CDK complexes (cyclin E-CDK2, cyclin D2-CDK4, and cyclin A-CDK2) and, to lesser extent, of the mitotic cyclin B-CDC2. Negative regulator of cell proliferation. May play a role in maintenance of the non-proliferative state throughout life.</text>
</comment>
<comment type="subunit">
    <text evidence="6">Interacts with PCNA.</text>
</comment>
<comment type="interaction">
    <interactant intactId="EBI-519256">
        <id>P49918</id>
    </interactant>
    <interactant intactId="EBI-295644">
        <id>P11802</id>
        <label>CDK4</label>
    </interactant>
    <organismsDiffer>false</organismsDiffer>
    <experiments>2</experiments>
</comment>
<comment type="interaction">
    <interactant intactId="EBI-519256">
        <id>P49918</id>
    </interactant>
    <interactant intactId="EBI-719790">
        <id>Q9NXK8</id>
        <label>FBXL12</label>
    </interactant>
    <organismsDiffer>false</organismsDiffer>
    <experiments>6</experiments>
</comment>
<comment type="interaction">
    <interactant intactId="EBI-519256">
        <id>P49918</id>
    </interactant>
    <interactant intactId="EBI-355924">
        <id>P33993</id>
        <label>MCM7</label>
    </interactant>
    <organismsDiffer>false</organismsDiffer>
    <experiments>2</experiments>
</comment>
<comment type="subcellular location">
    <subcellularLocation>
        <location evidence="1">Nucleus</location>
    </subcellularLocation>
</comment>
<comment type="alternative products">
    <event type="alternative splicing"/>
    <isoform>
        <id>P49918-1</id>
        <name>Long</name>
        <sequence type="displayed"/>
    </isoform>
    <isoform>
        <id>P49918-2</id>
        <name>Short</name>
        <sequence type="described" ref="VSP_000867"/>
    </isoform>
</comment>
<comment type="tissue specificity">
    <text evidence="6">Expressed in the heart, brain, lung, skeletal muscle, kidney, pancreas and testis. Expressed in the eye. High levels are seen in the placenta while low levels are seen in the liver.</text>
</comment>
<comment type="developmental stage">
    <text evidence="6">Expressed within a subset of cells in the subcapsular or developing definitive zone of the adrenal gland.</text>
</comment>
<comment type="disease" evidence="5 7">
    <disease id="DI-00179">
        <name>Beckwith-Wiedemann syndrome</name>
        <acronym>BWS</acronym>
        <description>A disorder characterized by anterior abdominal wall defects including exomphalos (omphalocele), pre- and postnatal overgrowth, and macroglossia. Additional less frequent complications include specific developmental defects and a predisposition to embryonal tumors.</description>
        <dbReference type="MIM" id="130650"/>
    </disease>
    <text>The disease is caused by variants affecting the gene represented in this entry.</text>
</comment>
<comment type="disease" evidence="6">
    <disease id="DI-03499">
        <name>Intrauterine growth retardation, metaphyseal dysplasia, adrenal hypoplasia congenita, and genital anomalies</name>
        <acronym>IMAGE</acronym>
        <description>A rare condition characterized by intrauterine growth restriction, metaphyseal dysplasia, congenital adrenal hypoplasia, and genital anomalies. Patients with this condition may present shortly after birth with severe adrenal insufficiency, which can be life-threatening if not recognized early and commenced on steroid replacement therapy. Other reported features in this condition include, hypercalciuria and/or hypercalcemia, craniosynostosis, cleft palate, and scoliosis.</description>
        <dbReference type="MIM" id="614732"/>
    </disease>
    <text>The disease is caused by variants affecting the gene represented in this entry.</text>
</comment>
<comment type="miscellaneous">
    <text evidence="9">Paternally imprinted, therefore most expression comes from the maternal allele.</text>
</comment>
<comment type="similarity">
    <text evidence="8">Belongs to the CDI family.</text>
</comment>
<protein>
    <recommendedName>
        <fullName>Cyclin-dependent kinase inhibitor 1C</fullName>
    </recommendedName>
    <alternativeName>
        <fullName>Cyclin-dependent kinase inhibitor p57</fullName>
    </alternativeName>
    <alternativeName>
        <fullName>p57Kip2</fullName>
    </alternativeName>
</protein>
<reference key="1">
    <citation type="journal article" date="1995" name="Genes Dev.">
        <title>p57KIP2, a structurally distinct member of the p21CIP1 Cdk inhibitor family, is a candidate tumor suppressor gene.</title>
        <authorList>
            <person name="Matsuoka S."/>
            <person name="Edwards M.C."/>
            <person name="Bai C."/>
            <person name="Parker S."/>
            <person name="Zhang P."/>
            <person name="Baldini A."/>
            <person name="Harper J.W."/>
            <person name="Elledge S.J."/>
        </authorList>
    </citation>
    <scope>NUCLEOTIDE SEQUENCE [MRNA] (ISOFORM LONG)</scope>
    <source>
        <tissue>Embryo</tissue>
    </source>
</reference>
<reference key="2">
    <citation type="journal article" date="1996" name="Cancer Res.">
        <title>Genomic organization of the human p57KIP2 gene and its analysis in the G401 Wilms' tumor assay.</title>
        <authorList>
            <person name="Reid L.H."/>
            <person name="Crider-Miller S.J."/>
            <person name="West A."/>
            <person name="Lee M.H."/>
            <person name="Massague J."/>
            <person name="Weissman B.E."/>
        </authorList>
    </citation>
    <scope>NUCLEOTIDE SEQUENCE [GENOMIC DNA]</scope>
</reference>
<reference key="3">
    <citation type="journal article" date="2004" name="Genome Res.">
        <title>The status, quality, and expansion of the NIH full-length cDNA project: the Mammalian Gene Collection (MGC).</title>
        <authorList>
            <consortium name="The MGC Project Team"/>
        </authorList>
    </citation>
    <scope>NUCLEOTIDE SEQUENCE [LARGE SCALE MRNA] (ISOFORM LONG)</scope>
    <source>
        <tissue>Placenta</tissue>
    </source>
</reference>
<reference key="4">
    <citation type="journal article" date="1996" name="Hum. Genet.">
        <title>Characterization of the human p57KIP2 gene: alternative splicing, insertion/deletion polymorphisms in VNTR sequences in the coding region, and mutational analysis.</title>
        <authorList>
            <person name="Tokino T."/>
            <person name="Urano T."/>
            <person name="Furuhata T."/>
            <person name="Matsushima M."/>
            <person name="Miyatsu T."/>
            <person name="Sasaki S."/>
            <person name="Nakamura Y."/>
        </authorList>
    </citation>
    <scope>NUCLEOTIDE SEQUENCE [GENOMIC DNA] OF 12-316</scope>
    <scope>VARIANTS</scope>
</reference>
<reference key="5">
    <citation type="journal article" date="1999" name="J. Med. Genet.">
        <title>Analysis of germline CDKN1C (p57-KIP2) mutations in familial and sporadic Beckwith-Wiedemann syndrome (BWS) provides a novel genotype-phenotype correlation.</title>
        <authorList>
            <person name="Lam W.W.K."/>
            <person name="Hatada I."/>
            <person name="Ohishi S."/>
            <person name="Mukai T."/>
            <person name="Joyce J.A."/>
            <person name="Cole T.R.P."/>
            <person name="Donnai D."/>
            <person name="Reik W."/>
            <person name="Schofield P.N."/>
            <person name="Maher E.R."/>
        </authorList>
    </citation>
    <scope>INVOLVEMENT IN BWS</scope>
</reference>
<reference key="6">
    <citation type="journal article" date="2008" name="Proc. Natl. Acad. Sci. U.S.A.">
        <title>A quantitative atlas of mitotic phosphorylation.</title>
        <authorList>
            <person name="Dephoure N."/>
            <person name="Zhou C."/>
            <person name="Villen J."/>
            <person name="Beausoleil S.A."/>
            <person name="Bakalarski C.E."/>
            <person name="Elledge S.J."/>
            <person name="Gygi S.P."/>
        </authorList>
    </citation>
    <scope>PHOSPHORYLATION [LARGE SCALE ANALYSIS] AT SER-268</scope>
    <scope>IDENTIFICATION BY MASS SPECTROMETRY [LARGE SCALE ANALYSIS]</scope>
    <source>
        <tissue>Cervix carcinoma</tissue>
    </source>
</reference>
<reference key="7">
    <citation type="journal article" date="2012" name="Nat. Genet.">
        <title>Mutations in the PCNA-binding domain of CDKN1C cause IMAGe syndrome.</title>
        <authorList>
            <person name="Arboleda V.A."/>
            <person name="Lee H."/>
            <person name="Parnaik R."/>
            <person name="Fleming A."/>
            <person name="Banerjee A."/>
            <person name="Ferraz-de-Souza B."/>
            <person name="Delot E.C."/>
            <person name="Rodriguez-Fernandez I.A."/>
            <person name="Braslavsky D."/>
            <person name="Bergada I."/>
            <person name="Dell'Angelica E.C."/>
            <person name="Nelson S.F."/>
            <person name="Martinez-Agosto J.A."/>
            <person name="Achermann J.C."/>
            <person name="Vilain E."/>
        </authorList>
    </citation>
    <scope>TISSUE SPECIFICITY</scope>
    <scope>DEVELOPMENTAL STAGE</scope>
    <scope>INTERACTION WITH PCNA</scope>
    <scope>VARIANTS IMAGE ASN-274; SER-276; VAL-276; GLU-278 AND PRO-279</scope>
    <scope>CHARACTERIZATION OF VARIANTS IMAGE SER-276 AND GLU-278</scope>
</reference>
<reference key="8">
    <citation type="journal article" date="2015" name="Hum. Mutat.">
        <title>Mutations of the imprinted CDKN1C gene as a cause of the overgrowth Beckwith-Wiedemann syndrome: clinical spectrum and functional characterization.</title>
        <authorList>
            <person name="Brioude F."/>
            <person name="Netchine I."/>
            <person name="Praz F."/>
            <person name="Le Jule M."/>
            <person name="Calmel C."/>
            <person name="Lacombe D."/>
            <person name="Edery P."/>
            <person name="Catala M."/>
            <person name="Odent S."/>
            <person name="Isidor B."/>
            <person name="Lyonnet S."/>
            <person name="Sigaudy S."/>
            <person name="Leheup B."/>
            <person name="Audebert-Bellanger S."/>
            <person name="Burglen L."/>
            <person name="Giuliano F."/>
            <person name="Alessandri J.L."/>
            <person name="Cormier-Daire V."/>
            <person name="Laffargue F."/>
            <person name="Blesson S."/>
            <person name="Coupier I."/>
            <person name="Lespinasse J."/>
            <person name="Blanchet P."/>
            <person name="Boute O."/>
            <person name="Baumann C."/>
            <person name="Polak M."/>
            <person name="Doray B."/>
            <person name="Verloes A."/>
            <person name="Viot G."/>
            <person name="Le Bouc Y."/>
            <person name="Rossignol S."/>
        </authorList>
    </citation>
    <scope>VARIANTS BWS LEU-12; PRO-53; ASP-64 DEL; LEU-70; ALA-158 AND PRO-ALA-215 INS</scope>
    <scope>PATERNAL IMPRINTING</scope>
</reference>
<sequence length="316" mass="32177">MSDASLRSTSTMERLVARGTFPVLVRTSACRSLFGPVDHEELSRELQARLAELNAEDQNRWDYDFQQDMPLRGPGRLQWTEVDSDSVPAFYRETVQVGRCRLLLAPRPVAVAVAVSPPLEPAAESLDGLEEAPEQLPSVPVPAPASTPPPVPVLAPAPAPAPAPVAAPVAAPVAVAVLAPAPAPAPAPAPAPAPVAAPAPAPAPAPAPAPAPAPAPDAAPQESAEQGANQGQRGQEPLADQLHSGISGRPAAGTAAASANGAAIKKLSGPLISDFFAKRKRSAPEKSSGDVPAPCPSPSAAPGVGSVEQTPRKRLR</sequence>
<accession>P49918</accession>
<organism>
    <name type="scientific">Homo sapiens</name>
    <name type="common">Human</name>
    <dbReference type="NCBI Taxonomy" id="9606"/>
    <lineage>
        <taxon>Eukaryota</taxon>
        <taxon>Metazoa</taxon>
        <taxon>Chordata</taxon>
        <taxon>Craniata</taxon>
        <taxon>Vertebrata</taxon>
        <taxon>Euteleostomi</taxon>
        <taxon>Mammalia</taxon>
        <taxon>Eutheria</taxon>
        <taxon>Euarchontoglires</taxon>
        <taxon>Primates</taxon>
        <taxon>Haplorrhini</taxon>
        <taxon>Catarrhini</taxon>
        <taxon>Hominidae</taxon>
        <taxon>Homo</taxon>
    </lineage>
</organism>